<name>HIS8_SHIB3</name>
<comment type="catalytic activity">
    <reaction evidence="1">
        <text>L-histidinol phosphate + 2-oxoglutarate = 3-(imidazol-4-yl)-2-oxopropyl phosphate + L-glutamate</text>
        <dbReference type="Rhea" id="RHEA:23744"/>
        <dbReference type="ChEBI" id="CHEBI:16810"/>
        <dbReference type="ChEBI" id="CHEBI:29985"/>
        <dbReference type="ChEBI" id="CHEBI:57766"/>
        <dbReference type="ChEBI" id="CHEBI:57980"/>
        <dbReference type="EC" id="2.6.1.9"/>
    </reaction>
</comment>
<comment type="cofactor">
    <cofactor evidence="1">
        <name>pyridoxal 5'-phosphate</name>
        <dbReference type="ChEBI" id="CHEBI:597326"/>
    </cofactor>
</comment>
<comment type="pathway">
    <text evidence="1">Amino-acid biosynthesis; L-histidine biosynthesis; L-histidine from 5-phospho-alpha-D-ribose 1-diphosphate: step 7/9.</text>
</comment>
<comment type="subunit">
    <text evidence="1">Homodimer.</text>
</comment>
<comment type="similarity">
    <text evidence="1">Belongs to the class-II pyridoxal-phosphate-dependent aminotransferase family. Histidinol-phosphate aminotransferase subfamily.</text>
</comment>
<sequence length="356" mass="39406">MSTVTITDLARENVRNLTPYQSARRLGGNGDVWLNANEYPTAVEFQLTQQTLNRYPECQPKAVIENYAQYAGVKPEQVLVSRGADEGIELLIRAFCEPGKDSILYCPPTYGMYSVSAETIGVECRTVPTLDNWQLDLQGISDKLDGVKVVYVCSPNNPTGQLINPQDFRTLLELTRGKAIVVADEAYIEFCPQASLAGWLTEYPHLAILRTLSKAFALAGLRCGFTLANEEVINLLMKVIAPYPLSTPVADIAAQALSPQGIVAMRERVAQIIAEREYLIAALKEIPCVEQVFDSETNYILARFKASSAVFKSLWDQGIILRDQNKQPSLSGCLRITVGTREESQRVIDALRAEQV</sequence>
<keyword id="KW-0028">Amino-acid biosynthesis</keyword>
<keyword id="KW-0032">Aminotransferase</keyword>
<keyword id="KW-0368">Histidine biosynthesis</keyword>
<keyword id="KW-0663">Pyridoxal phosphate</keyword>
<keyword id="KW-1185">Reference proteome</keyword>
<keyword id="KW-0808">Transferase</keyword>
<evidence type="ECO:0000255" key="1">
    <source>
        <dbReference type="HAMAP-Rule" id="MF_01023"/>
    </source>
</evidence>
<reference key="1">
    <citation type="submission" date="2008-05" db="EMBL/GenBank/DDBJ databases">
        <title>Complete sequence of Shigella boydii serotype 18 strain BS512.</title>
        <authorList>
            <person name="Rasko D.A."/>
            <person name="Rosovitz M."/>
            <person name="Maurelli A.T."/>
            <person name="Myers G."/>
            <person name="Seshadri R."/>
            <person name="Cer R."/>
            <person name="Jiang L."/>
            <person name="Ravel J."/>
            <person name="Sebastian Y."/>
        </authorList>
    </citation>
    <scope>NUCLEOTIDE SEQUENCE [LARGE SCALE GENOMIC DNA]</scope>
    <source>
        <strain>CDC 3083-94 / BS512</strain>
    </source>
</reference>
<accession>B2TYF9</accession>
<protein>
    <recommendedName>
        <fullName evidence="1">Histidinol-phosphate aminotransferase</fullName>
        <ecNumber evidence="1">2.6.1.9</ecNumber>
    </recommendedName>
    <alternativeName>
        <fullName evidence="1">Imidazole acetol-phosphate transaminase</fullName>
    </alternativeName>
</protein>
<proteinExistence type="inferred from homology"/>
<organism>
    <name type="scientific">Shigella boydii serotype 18 (strain CDC 3083-94 / BS512)</name>
    <dbReference type="NCBI Taxonomy" id="344609"/>
    <lineage>
        <taxon>Bacteria</taxon>
        <taxon>Pseudomonadati</taxon>
        <taxon>Pseudomonadota</taxon>
        <taxon>Gammaproteobacteria</taxon>
        <taxon>Enterobacterales</taxon>
        <taxon>Enterobacteriaceae</taxon>
        <taxon>Shigella</taxon>
    </lineage>
</organism>
<gene>
    <name evidence="1" type="primary">hisC</name>
    <name type="ordered locus">SbBS512_E1211</name>
</gene>
<feature type="chain" id="PRO_1000135424" description="Histidinol-phosphate aminotransferase">
    <location>
        <begin position="1"/>
        <end position="356"/>
    </location>
</feature>
<feature type="modified residue" description="N6-(pyridoxal phosphate)lysine" evidence="1">
    <location>
        <position position="214"/>
    </location>
</feature>
<dbReference type="EC" id="2.6.1.9" evidence="1"/>
<dbReference type="EMBL" id="CP001063">
    <property type="protein sequence ID" value="ACD10188.1"/>
    <property type="molecule type" value="Genomic_DNA"/>
</dbReference>
<dbReference type="RefSeq" id="WP_000108981.1">
    <property type="nucleotide sequence ID" value="NC_010658.1"/>
</dbReference>
<dbReference type="SMR" id="B2TYF9"/>
<dbReference type="STRING" id="344609.SbBS512_E1211"/>
<dbReference type="KEGG" id="sbc:SbBS512_E1211"/>
<dbReference type="HOGENOM" id="CLU_017584_3_1_6"/>
<dbReference type="UniPathway" id="UPA00031">
    <property type="reaction ID" value="UER00012"/>
</dbReference>
<dbReference type="Proteomes" id="UP000001030">
    <property type="component" value="Chromosome"/>
</dbReference>
<dbReference type="GO" id="GO:0004400">
    <property type="term" value="F:histidinol-phosphate transaminase activity"/>
    <property type="evidence" value="ECO:0007669"/>
    <property type="project" value="UniProtKB-UniRule"/>
</dbReference>
<dbReference type="GO" id="GO:0030170">
    <property type="term" value="F:pyridoxal phosphate binding"/>
    <property type="evidence" value="ECO:0007669"/>
    <property type="project" value="InterPro"/>
</dbReference>
<dbReference type="GO" id="GO:0000105">
    <property type="term" value="P:L-histidine biosynthetic process"/>
    <property type="evidence" value="ECO:0007669"/>
    <property type="project" value="UniProtKB-UniRule"/>
</dbReference>
<dbReference type="CDD" id="cd00609">
    <property type="entry name" value="AAT_like"/>
    <property type="match status" value="1"/>
</dbReference>
<dbReference type="FunFam" id="3.40.640.10:FF:000032">
    <property type="entry name" value="Histidinol-phosphate aminotransferase"/>
    <property type="match status" value="1"/>
</dbReference>
<dbReference type="FunFam" id="3.90.1150.10:FF:000042">
    <property type="entry name" value="Histidinol-phosphate aminotransferase"/>
    <property type="match status" value="1"/>
</dbReference>
<dbReference type="Gene3D" id="3.90.1150.10">
    <property type="entry name" value="Aspartate Aminotransferase, domain 1"/>
    <property type="match status" value="1"/>
</dbReference>
<dbReference type="Gene3D" id="3.40.640.10">
    <property type="entry name" value="Type I PLP-dependent aspartate aminotransferase-like (Major domain)"/>
    <property type="match status" value="1"/>
</dbReference>
<dbReference type="HAMAP" id="MF_01023">
    <property type="entry name" value="HisC_aminotrans_2"/>
    <property type="match status" value="1"/>
</dbReference>
<dbReference type="InterPro" id="IPR001917">
    <property type="entry name" value="Aminotrans_II_pyridoxalP_BS"/>
</dbReference>
<dbReference type="InterPro" id="IPR004839">
    <property type="entry name" value="Aminotransferase_I/II_large"/>
</dbReference>
<dbReference type="InterPro" id="IPR005861">
    <property type="entry name" value="HisP_aminotrans"/>
</dbReference>
<dbReference type="InterPro" id="IPR015424">
    <property type="entry name" value="PyrdxlP-dep_Trfase"/>
</dbReference>
<dbReference type="InterPro" id="IPR015421">
    <property type="entry name" value="PyrdxlP-dep_Trfase_major"/>
</dbReference>
<dbReference type="InterPro" id="IPR015422">
    <property type="entry name" value="PyrdxlP-dep_Trfase_small"/>
</dbReference>
<dbReference type="NCBIfam" id="TIGR01141">
    <property type="entry name" value="hisC"/>
    <property type="match status" value="1"/>
</dbReference>
<dbReference type="PANTHER" id="PTHR42885:SF2">
    <property type="entry name" value="HISTIDINOL-PHOSPHATE AMINOTRANSFERASE"/>
    <property type="match status" value="1"/>
</dbReference>
<dbReference type="PANTHER" id="PTHR42885">
    <property type="entry name" value="HISTIDINOL-PHOSPHATE AMINOTRANSFERASE-RELATED"/>
    <property type="match status" value="1"/>
</dbReference>
<dbReference type="Pfam" id="PF00155">
    <property type="entry name" value="Aminotran_1_2"/>
    <property type="match status" value="1"/>
</dbReference>
<dbReference type="SUPFAM" id="SSF53383">
    <property type="entry name" value="PLP-dependent transferases"/>
    <property type="match status" value="1"/>
</dbReference>
<dbReference type="PROSITE" id="PS00599">
    <property type="entry name" value="AA_TRANSFER_CLASS_2"/>
    <property type="match status" value="1"/>
</dbReference>